<organism>
    <name type="scientific">Staphylococcus carnosus (strain TM300)</name>
    <dbReference type="NCBI Taxonomy" id="396513"/>
    <lineage>
        <taxon>Bacteria</taxon>
        <taxon>Bacillati</taxon>
        <taxon>Bacillota</taxon>
        <taxon>Bacilli</taxon>
        <taxon>Bacillales</taxon>
        <taxon>Staphylococcaceae</taxon>
        <taxon>Staphylococcus</taxon>
    </lineage>
</organism>
<name>HUTG_STACT</name>
<gene>
    <name evidence="1" type="primary">hutG</name>
    <name type="ordered locus">Sca_1831</name>
</gene>
<dbReference type="EC" id="3.5.3.8" evidence="1"/>
<dbReference type="EMBL" id="AM295250">
    <property type="protein sequence ID" value="CAL28736.1"/>
    <property type="molecule type" value="Genomic_DNA"/>
</dbReference>
<dbReference type="RefSeq" id="WP_015901072.1">
    <property type="nucleotide sequence ID" value="NC_012121.1"/>
</dbReference>
<dbReference type="SMR" id="B9DLS6"/>
<dbReference type="GeneID" id="93794287"/>
<dbReference type="KEGG" id="sca:SCA_1831"/>
<dbReference type="eggNOG" id="COG0010">
    <property type="taxonomic scope" value="Bacteria"/>
</dbReference>
<dbReference type="HOGENOM" id="CLU_039478_2_0_9"/>
<dbReference type="OrthoDB" id="9788689at2"/>
<dbReference type="BioCyc" id="SCAR396513:SCA_RS09295-MONOMER"/>
<dbReference type="UniPathway" id="UPA00379">
    <property type="reaction ID" value="UER00552"/>
</dbReference>
<dbReference type="Proteomes" id="UP000000444">
    <property type="component" value="Chromosome"/>
</dbReference>
<dbReference type="GO" id="GO:0008783">
    <property type="term" value="F:agmatinase activity"/>
    <property type="evidence" value="ECO:0007669"/>
    <property type="project" value="TreeGrafter"/>
</dbReference>
<dbReference type="GO" id="GO:0050415">
    <property type="term" value="F:formimidoylglutamase activity"/>
    <property type="evidence" value="ECO:0007669"/>
    <property type="project" value="UniProtKB-UniRule"/>
</dbReference>
<dbReference type="GO" id="GO:0030145">
    <property type="term" value="F:manganese ion binding"/>
    <property type="evidence" value="ECO:0007669"/>
    <property type="project" value="UniProtKB-UniRule"/>
</dbReference>
<dbReference type="GO" id="GO:0019556">
    <property type="term" value="P:L-histidine catabolic process to glutamate and formamide"/>
    <property type="evidence" value="ECO:0007669"/>
    <property type="project" value="UniProtKB-UniPathway"/>
</dbReference>
<dbReference type="GO" id="GO:0019557">
    <property type="term" value="P:L-histidine catabolic process to glutamate and formate"/>
    <property type="evidence" value="ECO:0007669"/>
    <property type="project" value="UniProtKB-UniPathway"/>
</dbReference>
<dbReference type="GO" id="GO:0033389">
    <property type="term" value="P:putrescine biosynthetic process from arginine, via agmatine"/>
    <property type="evidence" value="ECO:0007669"/>
    <property type="project" value="TreeGrafter"/>
</dbReference>
<dbReference type="CDD" id="cd09988">
    <property type="entry name" value="Formimidoylglutamase"/>
    <property type="match status" value="1"/>
</dbReference>
<dbReference type="Gene3D" id="3.40.800.10">
    <property type="entry name" value="Ureohydrolase domain"/>
    <property type="match status" value="1"/>
</dbReference>
<dbReference type="HAMAP" id="MF_00737">
    <property type="entry name" value="Formimidoylglutam"/>
    <property type="match status" value="1"/>
</dbReference>
<dbReference type="InterPro" id="IPR005923">
    <property type="entry name" value="HutG"/>
</dbReference>
<dbReference type="InterPro" id="IPR006035">
    <property type="entry name" value="Ureohydrolase"/>
</dbReference>
<dbReference type="InterPro" id="IPR023696">
    <property type="entry name" value="Ureohydrolase_dom_sf"/>
</dbReference>
<dbReference type="NCBIfam" id="TIGR01227">
    <property type="entry name" value="hutG"/>
    <property type="match status" value="1"/>
</dbReference>
<dbReference type="PANTHER" id="PTHR11358">
    <property type="entry name" value="ARGINASE/AGMATINASE"/>
    <property type="match status" value="1"/>
</dbReference>
<dbReference type="PANTHER" id="PTHR11358:SF35">
    <property type="entry name" value="FORMIMIDOYLGLUTAMASE"/>
    <property type="match status" value="1"/>
</dbReference>
<dbReference type="Pfam" id="PF00491">
    <property type="entry name" value="Arginase"/>
    <property type="match status" value="1"/>
</dbReference>
<dbReference type="PIRSF" id="PIRSF036979">
    <property type="entry name" value="Arginase"/>
    <property type="match status" value="1"/>
</dbReference>
<dbReference type="SUPFAM" id="SSF52768">
    <property type="entry name" value="Arginase/deacetylase"/>
    <property type="match status" value="1"/>
</dbReference>
<dbReference type="PROSITE" id="PS51409">
    <property type="entry name" value="ARGINASE_2"/>
    <property type="match status" value="1"/>
</dbReference>
<accession>B9DLS6</accession>
<comment type="function">
    <text evidence="1">Catalyzes the conversion of N-formimidoyl-L-glutamate to L-glutamate and formamide.</text>
</comment>
<comment type="catalytic activity">
    <reaction evidence="1">
        <text>N-formimidoyl-L-glutamate + H2O = formamide + L-glutamate</text>
        <dbReference type="Rhea" id="RHEA:22492"/>
        <dbReference type="ChEBI" id="CHEBI:15377"/>
        <dbReference type="ChEBI" id="CHEBI:16397"/>
        <dbReference type="ChEBI" id="CHEBI:29985"/>
        <dbReference type="ChEBI" id="CHEBI:58928"/>
        <dbReference type="EC" id="3.5.3.8"/>
    </reaction>
</comment>
<comment type="cofactor">
    <cofactor evidence="1">
        <name>Mn(2+)</name>
        <dbReference type="ChEBI" id="CHEBI:29035"/>
    </cofactor>
    <text evidence="1">Binds 2 manganese ions per subunit.</text>
</comment>
<comment type="pathway">
    <text evidence="1">Amino-acid degradation; L-histidine degradation into L-glutamate; L-glutamate from N-formimidoyl-L-glutamate (hydrolase route): step 1/1.</text>
</comment>
<comment type="similarity">
    <text evidence="1">Belongs to the arginase family.</text>
</comment>
<proteinExistence type="inferred from homology"/>
<feature type="chain" id="PRO_1000148215" description="Formimidoylglutamase">
    <location>
        <begin position="1"/>
        <end position="309"/>
    </location>
</feature>
<feature type="binding site" evidence="1">
    <location>
        <position position="128"/>
    </location>
    <ligand>
        <name>Mn(2+)</name>
        <dbReference type="ChEBI" id="CHEBI:29035"/>
        <label>1</label>
    </ligand>
</feature>
<feature type="binding site" evidence="1">
    <location>
        <position position="153"/>
    </location>
    <ligand>
        <name>Mn(2+)</name>
        <dbReference type="ChEBI" id="CHEBI:29035"/>
        <label>1</label>
    </ligand>
</feature>
<feature type="binding site" evidence="1">
    <location>
        <position position="153"/>
    </location>
    <ligand>
        <name>Mn(2+)</name>
        <dbReference type="ChEBI" id="CHEBI:29035"/>
        <label>2</label>
    </ligand>
</feature>
<feature type="binding site" evidence="1">
    <location>
        <position position="155"/>
    </location>
    <ligand>
        <name>Mn(2+)</name>
        <dbReference type="ChEBI" id="CHEBI:29035"/>
        <label>2</label>
    </ligand>
</feature>
<feature type="binding site" evidence="1">
    <location>
        <position position="157"/>
    </location>
    <ligand>
        <name>Mn(2+)</name>
        <dbReference type="ChEBI" id="CHEBI:29035"/>
        <label>1</label>
    </ligand>
</feature>
<feature type="binding site" evidence="1">
    <location>
        <position position="240"/>
    </location>
    <ligand>
        <name>Mn(2+)</name>
        <dbReference type="ChEBI" id="CHEBI:29035"/>
        <label>1</label>
    </ligand>
</feature>
<feature type="binding site" evidence="1">
    <location>
        <position position="240"/>
    </location>
    <ligand>
        <name>Mn(2+)</name>
        <dbReference type="ChEBI" id="CHEBI:29035"/>
        <label>2</label>
    </ligand>
</feature>
<feature type="binding site" evidence="1">
    <location>
        <position position="242"/>
    </location>
    <ligand>
        <name>Mn(2+)</name>
        <dbReference type="ChEBI" id="CHEBI:29035"/>
        <label>2</label>
    </ligand>
</feature>
<protein>
    <recommendedName>
        <fullName evidence="1">Formimidoylglutamase</fullName>
        <ecNumber evidence="1">3.5.3.8</ecNumber>
    </recommendedName>
    <alternativeName>
        <fullName evidence="1">Formiminoglutamase</fullName>
    </alternativeName>
    <alternativeName>
        <fullName evidence="1">Formiminoglutamate hydrolase</fullName>
    </alternativeName>
</protein>
<evidence type="ECO:0000255" key="1">
    <source>
        <dbReference type="HAMAP-Rule" id="MF_00737"/>
    </source>
</evidence>
<reference key="1">
    <citation type="journal article" date="2009" name="Appl. Environ. Microbiol.">
        <title>Genome analysis of the meat starter culture bacterium Staphylococcus carnosus TM300.</title>
        <authorList>
            <person name="Rosenstein R."/>
            <person name="Nerz C."/>
            <person name="Biswas L."/>
            <person name="Resch A."/>
            <person name="Raddatz G."/>
            <person name="Schuster S.C."/>
            <person name="Goetz F."/>
        </authorList>
    </citation>
    <scope>NUCLEOTIDE SEQUENCE [LARGE SCALE GENOMIC DNA]</scope>
    <source>
        <strain>TM300</strain>
    </source>
</reference>
<sequence length="309" mass="34458">MYKQANPDLWQGRIDSETDESQFRHFQTIELKDINETKVDKKAGTGILGYAVDKGVELNNGRVGAQEGPDAVRKAFGNLSVLTPCPVYDYGNVYHDHDHLIDTQEEYAELAAKMFQNHNYSFLVGGGHDIAYAQYLAMRKAYPDSSIGVINIDAHFDTRKADSSTSGTSFRQILEGDDNADYFVLGIQSASNTKSLFDYAEERGIEYVTADEILHEISPTIKDKIDHFINRHDVIMFTICMDVVDSAFAPGVSAPAVNGLTPHIILELSRRIVGHPKLVSISVAETNPLYDMDNRTAKLVALFLHNFIH</sequence>
<keyword id="KW-0369">Histidine metabolism</keyword>
<keyword id="KW-0378">Hydrolase</keyword>
<keyword id="KW-0464">Manganese</keyword>
<keyword id="KW-0479">Metal-binding</keyword>
<keyword id="KW-1185">Reference proteome</keyword>